<accession>D9SJ16</accession>
<protein>
    <recommendedName>
        <fullName evidence="1">Malonyl-[acyl-carrier protein] O-methyltransferase</fullName>
        <shortName evidence="1">Malonyl-ACP O-methyltransferase</shortName>
        <ecNumber evidence="1">2.1.1.197</ecNumber>
    </recommendedName>
    <alternativeName>
        <fullName evidence="1">Biotin synthesis protein BioC</fullName>
    </alternativeName>
</protein>
<evidence type="ECO:0000255" key="1">
    <source>
        <dbReference type="HAMAP-Rule" id="MF_00835"/>
    </source>
</evidence>
<sequence length="290" mass="32394">MNEFVIDKKAMRQAFSRAAEGYDASAVLQREVCMRMLERLEYIKLQPARLLDAGSGTGWGGRQLAEKYPAAQVISLDIAIGMLQTSKSRSSWWQKLFGGCRQLPVCADVEALPLAANSLDMVWSNLAVQWCNDLPATFVELHRVLKTEGLLMFSTLGPDTLKELRQAFKGVDERSHLNRFADMHDIGDMLVQAGFAEPVMDMEYLTLTYEDVRGVLQDLKAIGAHNTTAGRGQGLMGKAAWARLLENYEKLRRDGKLPATYEVVYGHAWKPAPRVNRDGAAIIKTSFKIK</sequence>
<keyword id="KW-0093">Biotin biosynthesis</keyword>
<keyword id="KW-0489">Methyltransferase</keyword>
<keyword id="KW-1185">Reference proteome</keyword>
<keyword id="KW-0949">S-adenosyl-L-methionine</keyword>
<keyword id="KW-0808">Transferase</keyword>
<gene>
    <name evidence="1" type="primary">bioC</name>
    <name type="ordered locus">Galf_0247</name>
</gene>
<organism>
    <name type="scientific">Gallionella capsiferriformans (strain ES-2)</name>
    <name type="common">Gallionella ferruginea capsiferriformans (strain ES-2)</name>
    <dbReference type="NCBI Taxonomy" id="395494"/>
    <lineage>
        <taxon>Bacteria</taxon>
        <taxon>Pseudomonadati</taxon>
        <taxon>Pseudomonadota</taxon>
        <taxon>Betaproteobacteria</taxon>
        <taxon>Nitrosomonadales</taxon>
        <taxon>Gallionellaceae</taxon>
        <taxon>Gallionella</taxon>
    </lineage>
</organism>
<name>BIOC_GALCS</name>
<dbReference type="EC" id="2.1.1.197" evidence="1"/>
<dbReference type="EMBL" id="CP002159">
    <property type="protein sequence ID" value="ADL54292.1"/>
    <property type="molecule type" value="Genomic_DNA"/>
</dbReference>
<dbReference type="RefSeq" id="WP_013292235.1">
    <property type="nucleotide sequence ID" value="NC_014394.1"/>
</dbReference>
<dbReference type="SMR" id="D9SJ16"/>
<dbReference type="STRING" id="395494.Galf_0247"/>
<dbReference type="KEGG" id="gca:Galf_0247"/>
<dbReference type="eggNOG" id="COG2226">
    <property type="taxonomic scope" value="Bacteria"/>
</dbReference>
<dbReference type="HOGENOM" id="CLU_046586_2_1_4"/>
<dbReference type="OrthoDB" id="9760689at2"/>
<dbReference type="UniPathway" id="UPA00078"/>
<dbReference type="Proteomes" id="UP000001235">
    <property type="component" value="Chromosome"/>
</dbReference>
<dbReference type="GO" id="GO:0010340">
    <property type="term" value="F:carboxyl-O-methyltransferase activity"/>
    <property type="evidence" value="ECO:0007669"/>
    <property type="project" value="UniProtKB-UniRule"/>
</dbReference>
<dbReference type="GO" id="GO:0102130">
    <property type="term" value="F:malonyl-CoA methyltransferase activity"/>
    <property type="evidence" value="ECO:0007669"/>
    <property type="project" value="UniProtKB-EC"/>
</dbReference>
<dbReference type="GO" id="GO:0008757">
    <property type="term" value="F:S-adenosylmethionine-dependent methyltransferase activity"/>
    <property type="evidence" value="ECO:0007669"/>
    <property type="project" value="InterPro"/>
</dbReference>
<dbReference type="GO" id="GO:0009102">
    <property type="term" value="P:biotin biosynthetic process"/>
    <property type="evidence" value="ECO:0007669"/>
    <property type="project" value="UniProtKB-UniRule"/>
</dbReference>
<dbReference type="GO" id="GO:0032259">
    <property type="term" value="P:methylation"/>
    <property type="evidence" value="ECO:0007669"/>
    <property type="project" value="UniProtKB-KW"/>
</dbReference>
<dbReference type="CDD" id="cd02440">
    <property type="entry name" value="AdoMet_MTases"/>
    <property type="match status" value="1"/>
</dbReference>
<dbReference type="Gene3D" id="3.40.50.150">
    <property type="entry name" value="Vaccinia Virus protein VP39"/>
    <property type="match status" value="1"/>
</dbReference>
<dbReference type="HAMAP" id="MF_00835">
    <property type="entry name" value="BioC"/>
    <property type="match status" value="1"/>
</dbReference>
<dbReference type="InterPro" id="IPR011814">
    <property type="entry name" value="BioC"/>
</dbReference>
<dbReference type="InterPro" id="IPR050602">
    <property type="entry name" value="Malonyl-ACP_OMT"/>
</dbReference>
<dbReference type="InterPro" id="IPR013216">
    <property type="entry name" value="Methyltransf_11"/>
</dbReference>
<dbReference type="InterPro" id="IPR029063">
    <property type="entry name" value="SAM-dependent_MTases_sf"/>
</dbReference>
<dbReference type="NCBIfam" id="TIGR02072">
    <property type="entry name" value="BioC"/>
    <property type="match status" value="1"/>
</dbReference>
<dbReference type="PANTHER" id="PTHR13090">
    <property type="entry name" value="ARGININE-HYDROXYLASE NDUFAF5, MITOCHONDRIAL"/>
    <property type="match status" value="1"/>
</dbReference>
<dbReference type="PANTHER" id="PTHR13090:SF1">
    <property type="entry name" value="ARGININE-HYDROXYLASE NDUFAF5, MITOCHONDRIAL"/>
    <property type="match status" value="1"/>
</dbReference>
<dbReference type="Pfam" id="PF08241">
    <property type="entry name" value="Methyltransf_11"/>
    <property type="match status" value="1"/>
</dbReference>
<dbReference type="SUPFAM" id="SSF53335">
    <property type="entry name" value="S-adenosyl-L-methionine-dependent methyltransferases"/>
    <property type="match status" value="1"/>
</dbReference>
<feature type="chain" id="PRO_0000412498" description="Malonyl-[acyl-carrier protein] O-methyltransferase">
    <location>
        <begin position="1"/>
        <end position="290"/>
    </location>
</feature>
<comment type="function">
    <text evidence="1">Converts the free carboxyl group of a malonyl-thioester to its methyl ester by transfer of a methyl group from S-adenosyl-L-methionine (SAM). It allows to synthesize pimeloyl-ACP via the fatty acid synthetic pathway.</text>
</comment>
<comment type="catalytic activity">
    <reaction evidence="1">
        <text>malonyl-[ACP] + S-adenosyl-L-methionine = malonyl-[ACP] methyl ester + S-adenosyl-L-homocysteine</text>
        <dbReference type="Rhea" id="RHEA:17105"/>
        <dbReference type="Rhea" id="RHEA-COMP:9623"/>
        <dbReference type="Rhea" id="RHEA-COMP:9954"/>
        <dbReference type="ChEBI" id="CHEBI:57856"/>
        <dbReference type="ChEBI" id="CHEBI:59789"/>
        <dbReference type="ChEBI" id="CHEBI:78449"/>
        <dbReference type="ChEBI" id="CHEBI:78845"/>
        <dbReference type="EC" id="2.1.1.197"/>
    </reaction>
</comment>
<comment type="pathway">
    <text evidence="1">Cofactor biosynthesis; biotin biosynthesis.</text>
</comment>
<comment type="similarity">
    <text evidence="1">Belongs to the methyltransferase superfamily.</text>
</comment>
<reference key="1">
    <citation type="submission" date="2010-08" db="EMBL/GenBank/DDBJ databases">
        <title>Complete sequence of Gallionella capsiferriformans ES-2.</title>
        <authorList>
            <consortium name="US DOE Joint Genome Institute"/>
            <person name="Lucas S."/>
            <person name="Copeland A."/>
            <person name="Lapidus A."/>
            <person name="Cheng J.-F."/>
            <person name="Bruce D."/>
            <person name="Goodwin L."/>
            <person name="Pitluck S."/>
            <person name="Chertkov O."/>
            <person name="Davenport K.W."/>
            <person name="Detter J.C."/>
            <person name="Han C."/>
            <person name="Tapia R."/>
            <person name="Land M."/>
            <person name="Hauser L."/>
            <person name="Chang Y.-J."/>
            <person name="Jeffries C."/>
            <person name="Kyrpides N."/>
            <person name="Ivanova N."/>
            <person name="Mikhailova N."/>
            <person name="Shelobolina E.S."/>
            <person name="Picardal F."/>
            <person name="Roden E."/>
            <person name="Emerson D."/>
            <person name="Woyke T."/>
        </authorList>
    </citation>
    <scope>NUCLEOTIDE SEQUENCE [LARGE SCALE GENOMIC DNA]</scope>
    <source>
        <strain>ES-2</strain>
    </source>
</reference>
<proteinExistence type="inferred from homology"/>